<dbReference type="EC" id="7.1.1.-" evidence="1"/>
<dbReference type="EMBL" id="CP000082">
    <property type="protein sequence ID" value="AAZ18451.1"/>
    <property type="molecule type" value="Genomic_DNA"/>
</dbReference>
<dbReference type="RefSeq" id="WP_011279880.1">
    <property type="nucleotide sequence ID" value="NC_007204.1"/>
</dbReference>
<dbReference type="SMR" id="Q4FU57"/>
<dbReference type="STRING" id="259536.Psyc_0591"/>
<dbReference type="KEGG" id="par:Psyc_0591"/>
<dbReference type="eggNOG" id="COG1143">
    <property type="taxonomic scope" value="Bacteria"/>
</dbReference>
<dbReference type="HOGENOM" id="CLU_067218_4_3_6"/>
<dbReference type="OrthoDB" id="9808559at2"/>
<dbReference type="Proteomes" id="UP000000546">
    <property type="component" value="Chromosome"/>
</dbReference>
<dbReference type="GO" id="GO:0005886">
    <property type="term" value="C:plasma membrane"/>
    <property type="evidence" value="ECO:0007669"/>
    <property type="project" value="UniProtKB-SubCell"/>
</dbReference>
<dbReference type="GO" id="GO:0051539">
    <property type="term" value="F:4 iron, 4 sulfur cluster binding"/>
    <property type="evidence" value="ECO:0007669"/>
    <property type="project" value="UniProtKB-KW"/>
</dbReference>
<dbReference type="GO" id="GO:0005506">
    <property type="term" value="F:iron ion binding"/>
    <property type="evidence" value="ECO:0007669"/>
    <property type="project" value="UniProtKB-UniRule"/>
</dbReference>
<dbReference type="GO" id="GO:0050136">
    <property type="term" value="F:NADH:ubiquinone reductase (non-electrogenic) activity"/>
    <property type="evidence" value="ECO:0007669"/>
    <property type="project" value="UniProtKB-UniRule"/>
</dbReference>
<dbReference type="GO" id="GO:0048038">
    <property type="term" value="F:quinone binding"/>
    <property type="evidence" value="ECO:0007669"/>
    <property type="project" value="UniProtKB-KW"/>
</dbReference>
<dbReference type="GO" id="GO:0009060">
    <property type="term" value="P:aerobic respiration"/>
    <property type="evidence" value="ECO:0007669"/>
    <property type="project" value="TreeGrafter"/>
</dbReference>
<dbReference type="FunFam" id="3.30.70.3270:FF:000002">
    <property type="entry name" value="NADH-quinone oxidoreductase subunit I"/>
    <property type="match status" value="1"/>
</dbReference>
<dbReference type="Gene3D" id="3.30.70.3270">
    <property type="match status" value="1"/>
</dbReference>
<dbReference type="HAMAP" id="MF_01351">
    <property type="entry name" value="NDH1_NuoI"/>
    <property type="match status" value="1"/>
</dbReference>
<dbReference type="InterPro" id="IPR017896">
    <property type="entry name" value="4Fe4S_Fe-S-bd"/>
</dbReference>
<dbReference type="InterPro" id="IPR017900">
    <property type="entry name" value="4Fe4S_Fe_S_CS"/>
</dbReference>
<dbReference type="InterPro" id="IPR010226">
    <property type="entry name" value="NADH_quinone_OxRdtase_chainI"/>
</dbReference>
<dbReference type="NCBIfam" id="TIGR01971">
    <property type="entry name" value="NuoI"/>
    <property type="match status" value="1"/>
</dbReference>
<dbReference type="NCBIfam" id="NF004536">
    <property type="entry name" value="PRK05888.1-1"/>
    <property type="match status" value="1"/>
</dbReference>
<dbReference type="PANTHER" id="PTHR10849:SF20">
    <property type="entry name" value="NADH DEHYDROGENASE [UBIQUINONE] IRON-SULFUR PROTEIN 8, MITOCHONDRIAL"/>
    <property type="match status" value="1"/>
</dbReference>
<dbReference type="PANTHER" id="PTHR10849">
    <property type="entry name" value="NADH DEHYDROGENASE UBIQUINONE IRON-SULFUR PROTEIN 8, MITOCHONDRIAL"/>
    <property type="match status" value="1"/>
</dbReference>
<dbReference type="Pfam" id="PF12838">
    <property type="entry name" value="Fer4_7"/>
    <property type="match status" value="1"/>
</dbReference>
<dbReference type="SUPFAM" id="SSF54862">
    <property type="entry name" value="4Fe-4S ferredoxins"/>
    <property type="match status" value="1"/>
</dbReference>
<dbReference type="PROSITE" id="PS00198">
    <property type="entry name" value="4FE4S_FER_1"/>
    <property type="match status" value="2"/>
</dbReference>
<dbReference type="PROSITE" id="PS51379">
    <property type="entry name" value="4FE4S_FER_2"/>
    <property type="match status" value="2"/>
</dbReference>
<reference key="1">
    <citation type="journal article" date="2010" name="Appl. Environ. Microbiol.">
        <title>The genome sequence of Psychrobacter arcticus 273-4, a psychroactive Siberian permafrost bacterium, reveals mechanisms for adaptation to low-temperature growth.</title>
        <authorList>
            <person name="Ayala-del-Rio H.L."/>
            <person name="Chain P.S."/>
            <person name="Grzymski J.J."/>
            <person name="Ponder M.A."/>
            <person name="Ivanova N."/>
            <person name="Bergholz P.W."/>
            <person name="Di Bartolo G."/>
            <person name="Hauser L."/>
            <person name="Land M."/>
            <person name="Bakermans C."/>
            <person name="Rodrigues D."/>
            <person name="Klappenbach J."/>
            <person name="Zarka D."/>
            <person name="Larimer F."/>
            <person name="Richardson P."/>
            <person name="Murray A."/>
            <person name="Thomashow M."/>
            <person name="Tiedje J.M."/>
        </authorList>
    </citation>
    <scope>NUCLEOTIDE SEQUENCE [LARGE SCALE GENOMIC DNA]</scope>
    <source>
        <strain>DSM 17307 / VKM B-2377 / 273-4</strain>
    </source>
</reference>
<sequence>MFTTIKKTVIGLFTIVRSMWMVNSHAIRPRDTILYPEVPVPVPPRFRGRIILSRDPDGDERCVACNLCAVACPVGCISLQKAEREDGRWYPEFFRINFSRCIFCGLCEEACPTTAIQMTPDFEMSEYVRQDLVYEKEHLLISGPGKYPDYNYYRVTGMAVADKPKGAAQNEAAPIDLRSLLP</sequence>
<accession>Q4FU57</accession>
<evidence type="ECO:0000255" key="1">
    <source>
        <dbReference type="HAMAP-Rule" id="MF_01351"/>
    </source>
</evidence>
<comment type="function">
    <text evidence="1">NDH-1 shuttles electrons from NADH, via FMN and iron-sulfur (Fe-S) centers, to quinones in the respiratory chain. The immediate electron acceptor for the enzyme in this species is believed to be ubiquinone. Couples the redox reaction to proton translocation (for every two electrons transferred, four hydrogen ions are translocated across the cytoplasmic membrane), and thus conserves the redox energy in a proton gradient.</text>
</comment>
<comment type="catalytic activity">
    <reaction evidence="1">
        <text>a quinone + NADH + 5 H(+)(in) = a quinol + NAD(+) + 4 H(+)(out)</text>
        <dbReference type="Rhea" id="RHEA:57888"/>
        <dbReference type="ChEBI" id="CHEBI:15378"/>
        <dbReference type="ChEBI" id="CHEBI:24646"/>
        <dbReference type="ChEBI" id="CHEBI:57540"/>
        <dbReference type="ChEBI" id="CHEBI:57945"/>
        <dbReference type="ChEBI" id="CHEBI:132124"/>
    </reaction>
</comment>
<comment type="cofactor">
    <cofactor evidence="1">
        <name>[4Fe-4S] cluster</name>
        <dbReference type="ChEBI" id="CHEBI:49883"/>
    </cofactor>
    <text evidence="1">Binds 2 [4Fe-4S] clusters per subunit.</text>
</comment>
<comment type="subunit">
    <text evidence="1">NDH-1 is composed of 14 different subunits. Subunits NuoA, H, J, K, L, M, N constitute the membrane sector of the complex.</text>
</comment>
<comment type="subcellular location">
    <subcellularLocation>
        <location evidence="1">Cell inner membrane</location>
        <topology evidence="1">Peripheral membrane protein</topology>
    </subcellularLocation>
</comment>
<comment type="similarity">
    <text evidence="1">Belongs to the complex I 23 kDa subunit family.</text>
</comment>
<protein>
    <recommendedName>
        <fullName evidence="1">NADH-quinone oxidoreductase subunit I</fullName>
        <ecNumber evidence="1">7.1.1.-</ecNumber>
    </recommendedName>
    <alternativeName>
        <fullName evidence="1">NADH dehydrogenase I subunit I</fullName>
    </alternativeName>
    <alternativeName>
        <fullName evidence="1">NDH-1 subunit I</fullName>
    </alternativeName>
</protein>
<proteinExistence type="inferred from homology"/>
<name>NUOI_PSYA2</name>
<organism>
    <name type="scientific">Psychrobacter arcticus (strain DSM 17307 / VKM B-2377 / 273-4)</name>
    <dbReference type="NCBI Taxonomy" id="259536"/>
    <lineage>
        <taxon>Bacteria</taxon>
        <taxon>Pseudomonadati</taxon>
        <taxon>Pseudomonadota</taxon>
        <taxon>Gammaproteobacteria</taxon>
        <taxon>Moraxellales</taxon>
        <taxon>Moraxellaceae</taxon>
        <taxon>Psychrobacter</taxon>
    </lineage>
</organism>
<keyword id="KW-0004">4Fe-4S</keyword>
<keyword id="KW-0997">Cell inner membrane</keyword>
<keyword id="KW-1003">Cell membrane</keyword>
<keyword id="KW-0408">Iron</keyword>
<keyword id="KW-0411">Iron-sulfur</keyword>
<keyword id="KW-0472">Membrane</keyword>
<keyword id="KW-0479">Metal-binding</keyword>
<keyword id="KW-0520">NAD</keyword>
<keyword id="KW-0874">Quinone</keyword>
<keyword id="KW-1185">Reference proteome</keyword>
<keyword id="KW-0677">Repeat</keyword>
<keyword id="KW-1278">Translocase</keyword>
<keyword id="KW-0830">Ubiquinone</keyword>
<gene>
    <name evidence="1" type="primary">nuoI</name>
    <name type="ordered locus">Psyc_0591</name>
</gene>
<feature type="chain" id="PRO_0000245734" description="NADH-quinone oxidoreductase subunit I">
    <location>
        <begin position="1"/>
        <end position="182"/>
    </location>
</feature>
<feature type="domain" description="4Fe-4S ferredoxin-type 1" evidence="1">
    <location>
        <begin position="50"/>
        <end position="82"/>
    </location>
</feature>
<feature type="domain" description="4Fe-4S ferredoxin-type 2" evidence="1">
    <location>
        <begin position="92"/>
        <end position="121"/>
    </location>
</feature>
<feature type="binding site" evidence="1">
    <location>
        <position position="62"/>
    </location>
    <ligand>
        <name>[4Fe-4S] cluster</name>
        <dbReference type="ChEBI" id="CHEBI:49883"/>
        <label>1</label>
    </ligand>
</feature>
<feature type="binding site" evidence="1">
    <location>
        <position position="65"/>
    </location>
    <ligand>
        <name>[4Fe-4S] cluster</name>
        <dbReference type="ChEBI" id="CHEBI:49883"/>
        <label>1</label>
    </ligand>
</feature>
<feature type="binding site" evidence="1">
    <location>
        <position position="68"/>
    </location>
    <ligand>
        <name>[4Fe-4S] cluster</name>
        <dbReference type="ChEBI" id="CHEBI:49883"/>
        <label>1</label>
    </ligand>
</feature>
<feature type="binding site" evidence="1">
    <location>
        <position position="72"/>
    </location>
    <ligand>
        <name>[4Fe-4S] cluster</name>
        <dbReference type="ChEBI" id="CHEBI:49883"/>
        <label>2</label>
    </ligand>
</feature>
<feature type="binding site" evidence="1">
    <location>
        <position position="101"/>
    </location>
    <ligand>
        <name>[4Fe-4S] cluster</name>
        <dbReference type="ChEBI" id="CHEBI:49883"/>
        <label>2</label>
    </ligand>
</feature>
<feature type="binding site" evidence="1">
    <location>
        <position position="104"/>
    </location>
    <ligand>
        <name>[4Fe-4S] cluster</name>
        <dbReference type="ChEBI" id="CHEBI:49883"/>
        <label>2</label>
    </ligand>
</feature>
<feature type="binding site" evidence="1">
    <location>
        <position position="107"/>
    </location>
    <ligand>
        <name>[4Fe-4S] cluster</name>
        <dbReference type="ChEBI" id="CHEBI:49883"/>
        <label>2</label>
    </ligand>
</feature>
<feature type="binding site" evidence="1">
    <location>
        <position position="111"/>
    </location>
    <ligand>
        <name>[4Fe-4S] cluster</name>
        <dbReference type="ChEBI" id="CHEBI:49883"/>
        <label>1</label>
    </ligand>
</feature>